<protein>
    <recommendedName>
        <fullName evidence="1">NADH-quinone oxidoreductase subunit D</fullName>
        <ecNumber evidence="1">7.1.1.-</ecNumber>
    </recommendedName>
    <alternativeName>
        <fullName evidence="1">NADH dehydrogenase I subunit D</fullName>
    </alternativeName>
    <alternativeName>
        <fullName evidence="1">NDH-1 subunit D</fullName>
    </alternativeName>
</protein>
<accession>A5FQY6</accession>
<reference key="1">
    <citation type="submission" date="2007-05" db="EMBL/GenBank/DDBJ databases">
        <title>Complete sequence of Dehalococcoides sp. BAV1.</title>
        <authorList>
            <consortium name="US DOE Joint Genome Institute"/>
            <person name="Copeland A."/>
            <person name="Lucas S."/>
            <person name="Lapidus A."/>
            <person name="Barry K."/>
            <person name="Detter J.C."/>
            <person name="Glavina del Rio T."/>
            <person name="Hammon N."/>
            <person name="Israni S."/>
            <person name="Pitluck S."/>
            <person name="Lowry S."/>
            <person name="Clum A."/>
            <person name="Schmutz J."/>
            <person name="Larimer F."/>
            <person name="Land M."/>
            <person name="Hauser L."/>
            <person name="Kyrpides N."/>
            <person name="Kim E."/>
            <person name="Ritalahti K.M."/>
            <person name="Loeffler F."/>
            <person name="Richardson P."/>
        </authorList>
    </citation>
    <scope>NUCLEOTIDE SEQUENCE [LARGE SCALE GENOMIC DNA]</scope>
    <source>
        <strain>ATCC BAA-2100 / JCM 16839 / KCTC 5957 / BAV1</strain>
    </source>
</reference>
<keyword id="KW-1003">Cell membrane</keyword>
<keyword id="KW-0472">Membrane</keyword>
<keyword id="KW-0520">NAD</keyword>
<keyword id="KW-0874">Quinone</keyword>
<keyword id="KW-1278">Translocase</keyword>
<keyword id="KW-0813">Transport</keyword>
<keyword id="KW-0830">Ubiquinone</keyword>
<comment type="function">
    <text evidence="1">NDH-1 shuttles electrons from NADH, via FMN and iron-sulfur (Fe-S) centers, to quinones in the respiratory chain. The immediate electron acceptor for the enzyme in this species is believed to be ubiquinone. Couples the redox reaction to proton translocation (for every two electrons transferred, four hydrogen ions are translocated across the cytoplasmic membrane), and thus conserves the redox energy in a proton gradient.</text>
</comment>
<comment type="catalytic activity">
    <reaction evidence="1">
        <text>a quinone + NADH + 5 H(+)(in) = a quinol + NAD(+) + 4 H(+)(out)</text>
        <dbReference type="Rhea" id="RHEA:57888"/>
        <dbReference type="ChEBI" id="CHEBI:15378"/>
        <dbReference type="ChEBI" id="CHEBI:24646"/>
        <dbReference type="ChEBI" id="CHEBI:57540"/>
        <dbReference type="ChEBI" id="CHEBI:57945"/>
        <dbReference type="ChEBI" id="CHEBI:132124"/>
    </reaction>
</comment>
<comment type="subunit">
    <text evidence="1">NDH-1 is composed of 14 different subunits. Subunits NuoB, C, D, E, F, and G constitute the peripheral sector of the complex.</text>
</comment>
<comment type="subcellular location">
    <subcellularLocation>
        <location evidence="1">Cell membrane</location>
        <topology evidence="1">Peripheral membrane protein</topology>
        <orientation evidence="1">Cytoplasmic side</orientation>
    </subcellularLocation>
</comment>
<comment type="similarity">
    <text evidence="1">Belongs to the complex I 49 kDa subunit family.</text>
</comment>
<evidence type="ECO:0000255" key="1">
    <source>
        <dbReference type="HAMAP-Rule" id="MF_01358"/>
    </source>
</evidence>
<sequence length="367" mass="41751">MAIKTENFILNIGPQHPSTHGVFRLRIVLDGEVITDLEPVFGYLHRGIEKLAEGRTYLQDIPFTDRLDYLGSMTNNHAYVMAVEKLAGITVPERAEYIRVILDELQRIASHLAGLGFFLNDLGALQTPLLYMFREREKIVELFDMCSGQRLNYNYYRFGGFVQDLPEEFLPALKILLDTLPGFIDEYEQLISTNEIVLIRTKGVGVLKRDLAINSSAAGPVLRASGINWDIRRNDPYSIYNRFEFDIPIAKNGDTYDRYMIRILEMRQSVRILRQAVKDLPEGEIMGKAPKLLKPPAGEVYSRIEGPKGELGFYLVSDGTDKPYRWRVRPPCLLNLSALKDMVVGWKVADLMAIFGSIDIVMGEVDR</sequence>
<feature type="chain" id="PRO_0000371861" description="NADH-quinone oxidoreductase subunit D">
    <location>
        <begin position="1"/>
        <end position="367"/>
    </location>
</feature>
<organism>
    <name type="scientific">Dehalococcoides mccartyi (strain ATCC BAA-2100 / JCM 16839 / KCTC 5957 / BAV1)</name>
    <dbReference type="NCBI Taxonomy" id="216389"/>
    <lineage>
        <taxon>Bacteria</taxon>
        <taxon>Bacillati</taxon>
        <taxon>Chloroflexota</taxon>
        <taxon>Dehalococcoidia</taxon>
        <taxon>Dehalococcoidales</taxon>
        <taxon>Dehalococcoidaceae</taxon>
        <taxon>Dehalococcoides</taxon>
    </lineage>
</organism>
<proteinExistence type="inferred from homology"/>
<gene>
    <name evidence="1" type="primary">nuoD</name>
    <name type="ordered locus">DehaBAV1_0810</name>
</gene>
<name>NUOD_DEHMB</name>
<dbReference type="EC" id="7.1.1.-" evidence="1"/>
<dbReference type="EMBL" id="CP000688">
    <property type="protein sequence ID" value="ABQ17393.1"/>
    <property type="molecule type" value="Genomic_DNA"/>
</dbReference>
<dbReference type="SMR" id="A5FQY6"/>
<dbReference type="KEGG" id="deb:DehaBAV1_0810"/>
<dbReference type="PATRIC" id="fig|216389.18.peg.859"/>
<dbReference type="HOGENOM" id="CLU_015134_1_2_0"/>
<dbReference type="GO" id="GO:0005886">
    <property type="term" value="C:plasma membrane"/>
    <property type="evidence" value="ECO:0007669"/>
    <property type="project" value="UniProtKB-SubCell"/>
</dbReference>
<dbReference type="GO" id="GO:0051287">
    <property type="term" value="F:NAD binding"/>
    <property type="evidence" value="ECO:0007669"/>
    <property type="project" value="InterPro"/>
</dbReference>
<dbReference type="GO" id="GO:0050136">
    <property type="term" value="F:NADH:ubiquinone reductase (non-electrogenic) activity"/>
    <property type="evidence" value="ECO:0007669"/>
    <property type="project" value="UniProtKB-UniRule"/>
</dbReference>
<dbReference type="GO" id="GO:0048038">
    <property type="term" value="F:quinone binding"/>
    <property type="evidence" value="ECO:0007669"/>
    <property type="project" value="UniProtKB-KW"/>
</dbReference>
<dbReference type="Gene3D" id="1.10.645.10">
    <property type="entry name" value="Cytochrome-c3 Hydrogenase, chain B"/>
    <property type="match status" value="1"/>
</dbReference>
<dbReference type="HAMAP" id="MF_01358">
    <property type="entry name" value="NDH1_NuoD"/>
    <property type="match status" value="1"/>
</dbReference>
<dbReference type="InterPro" id="IPR001135">
    <property type="entry name" value="NADH_Q_OxRdtase_suD"/>
</dbReference>
<dbReference type="InterPro" id="IPR014029">
    <property type="entry name" value="NADH_UbQ_OxRdtase_49kDa_CS"/>
</dbReference>
<dbReference type="InterPro" id="IPR022885">
    <property type="entry name" value="NDH1_su_D/H"/>
</dbReference>
<dbReference type="InterPro" id="IPR029014">
    <property type="entry name" value="NiFe-Hase_large"/>
</dbReference>
<dbReference type="NCBIfam" id="NF004739">
    <property type="entry name" value="PRK06075.1"/>
    <property type="match status" value="1"/>
</dbReference>
<dbReference type="PANTHER" id="PTHR11993:SF10">
    <property type="entry name" value="NADH DEHYDROGENASE [UBIQUINONE] IRON-SULFUR PROTEIN 2, MITOCHONDRIAL"/>
    <property type="match status" value="1"/>
</dbReference>
<dbReference type="PANTHER" id="PTHR11993">
    <property type="entry name" value="NADH-UBIQUINONE OXIDOREDUCTASE 49 KDA SUBUNIT"/>
    <property type="match status" value="1"/>
</dbReference>
<dbReference type="Pfam" id="PF00346">
    <property type="entry name" value="Complex1_49kDa"/>
    <property type="match status" value="1"/>
</dbReference>
<dbReference type="SUPFAM" id="SSF56762">
    <property type="entry name" value="HydB/Nqo4-like"/>
    <property type="match status" value="1"/>
</dbReference>
<dbReference type="PROSITE" id="PS00535">
    <property type="entry name" value="COMPLEX1_49K"/>
    <property type="match status" value="1"/>
</dbReference>